<evidence type="ECO:0000255" key="1">
    <source>
        <dbReference type="HAMAP-Rule" id="MF_01389"/>
    </source>
</evidence>
<dbReference type="EMBL" id="CP000863">
    <property type="protein sequence ID" value="ACC56290.1"/>
    <property type="molecule type" value="Genomic_DNA"/>
</dbReference>
<dbReference type="RefSeq" id="WP_000140200.1">
    <property type="nucleotide sequence ID" value="NZ_CP031380.1"/>
</dbReference>
<dbReference type="SMR" id="B2HVS4"/>
<dbReference type="GeneID" id="92892980"/>
<dbReference type="KEGG" id="abc:ACICU_00978"/>
<dbReference type="HOGENOM" id="CLU_072144_1_0_6"/>
<dbReference type="Proteomes" id="UP000008839">
    <property type="component" value="Chromosome"/>
</dbReference>
<dbReference type="GO" id="GO:0005737">
    <property type="term" value="C:cytoplasm"/>
    <property type="evidence" value="ECO:0007669"/>
    <property type="project" value="UniProtKB-SubCell"/>
</dbReference>
<dbReference type="GO" id="GO:0005525">
    <property type="term" value="F:GTP binding"/>
    <property type="evidence" value="ECO:0007669"/>
    <property type="project" value="UniProtKB-KW"/>
</dbReference>
<dbReference type="GO" id="GO:0003924">
    <property type="term" value="F:GTPase activity"/>
    <property type="evidence" value="ECO:0007669"/>
    <property type="project" value="InterPro"/>
</dbReference>
<dbReference type="GO" id="GO:0016151">
    <property type="term" value="F:nickel cation binding"/>
    <property type="evidence" value="ECO:0007669"/>
    <property type="project" value="UniProtKB-UniRule"/>
</dbReference>
<dbReference type="GO" id="GO:0043419">
    <property type="term" value="P:urea catabolic process"/>
    <property type="evidence" value="ECO:0007669"/>
    <property type="project" value="InterPro"/>
</dbReference>
<dbReference type="CDD" id="cd05540">
    <property type="entry name" value="UreG"/>
    <property type="match status" value="1"/>
</dbReference>
<dbReference type="FunFam" id="3.40.50.300:FF:000208">
    <property type="entry name" value="Urease accessory protein UreG"/>
    <property type="match status" value="1"/>
</dbReference>
<dbReference type="Gene3D" id="3.40.50.300">
    <property type="entry name" value="P-loop containing nucleotide triphosphate hydrolases"/>
    <property type="match status" value="1"/>
</dbReference>
<dbReference type="HAMAP" id="MF_01389">
    <property type="entry name" value="UreG"/>
    <property type="match status" value="1"/>
</dbReference>
<dbReference type="InterPro" id="IPR003495">
    <property type="entry name" value="CobW/HypB/UreG_nucleotide-bd"/>
</dbReference>
<dbReference type="InterPro" id="IPR027417">
    <property type="entry name" value="P-loop_NTPase"/>
</dbReference>
<dbReference type="InterPro" id="IPR004400">
    <property type="entry name" value="UreG"/>
</dbReference>
<dbReference type="NCBIfam" id="TIGR00101">
    <property type="entry name" value="ureG"/>
    <property type="match status" value="1"/>
</dbReference>
<dbReference type="PANTHER" id="PTHR31715">
    <property type="entry name" value="UREASE ACCESSORY PROTEIN G"/>
    <property type="match status" value="1"/>
</dbReference>
<dbReference type="PANTHER" id="PTHR31715:SF0">
    <property type="entry name" value="UREASE ACCESSORY PROTEIN G"/>
    <property type="match status" value="1"/>
</dbReference>
<dbReference type="Pfam" id="PF02492">
    <property type="entry name" value="cobW"/>
    <property type="match status" value="1"/>
</dbReference>
<dbReference type="PIRSF" id="PIRSF005624">
    <property type="entry name" value="Ni-bind_GTPase"/>
    <property type="match status" value="1"/>
</dbReference>
<dbReference type="SUPFAM" id="SSF52540">
    <property type="entry name" value="P-loop containing nucleoside triphosphate hydrolases"/>
    <property type="match status" value="1"/>
</dbReference>
<accession>B2HVS4</accession>
<feature type="chain" id="PRO_0000347340" description="Urease accessory protein UreG">
    <location>
        <begin position="1"/>
        <end position="204"/>
    </location>
</feature>
<feature type="binding site" evidence="1">
    <location>
        <begin position="13"/>
        <end position="20"/>
    </location>
    <ligand>
        <name>GTP</name>
        <dbReference type="ChEBI" id="CHEBI:37565"/>
    </ligand>
</feature>
<gene>
    <name evidence="1" type="primary">ureG</name>
    <name type="ordered locus">ACICU_00978</name>
</gene>
<comment type="function">
    <text evidence="1">Facilitates the functional incorporation of the urease nickel metallocenter. This process requires GTP hydrolysis, probably effectuated by UreG.</text>
</comment>
<comment type="subunit">
    <text evidence="1">Homodimer. UreD, UreF and UreG form a complex that acts as a GTP-hydrolysis-dependent molecular chaperone, activating the urease apoprotein by helping to assemble the nickel containing metallocenter of UreC. The UreE protein probably delivers the nickel.</text>
</comment>
<comment type="subcellular location">
    <subcellularLocation>
        <location evidence="1">Cytoplasm</location>
    </subcellularLocation>
</comment>
<comment type="similarity">
    <text evidence="1">Belongs to the SIMIBI class G3E GTPase family. UreG subfamily.</text>
</comment>
<keyword id="KW-0143">Chaperone</keyword>
<keyword id="KW-0963">Cytoplasm</keyword>
<keyword id="KW-0342">GTP-binding</keyword>
<keyword id="KW-0996">Nickel insertion</keyword>
<keyword id="KW-0547">Nucleotide-binding</keyword>
<protein>
    <recommendedName>
        <fullName evidence="1">Urease accessory protein UreG</fullName>
    </recommendedName>
</protein>
<name>UREG_ACIBC</name>
<proteinExistence type="inferred from homology"/>
<organism>
    <name type="scientific">Acinetobacter baumannii (strain ACICU)</name>
    <dbReference type="NCBI Taxonomy" id="405416"/>
    <lineage>
        <taxon>Bacteria</taxon>
        <taxon>Pseudomonadati</taxon>
        <taxon>Pseudomonadota</taxon>
        <taxon>Gammaproteobacteria</taxon>
        <taxon>Moraxellales</taxon>
        <taxon>Moraxellaceae</taxon>
        <taxon>Acinetobacter</taxon>
        <taxon>Acinetobacter calcoaceticus/baumannii complex</taxon>
    </lineage>
</organism>
<reference key="1">
    <citation type="journal article" date="2008" name="Antimicrob. Agents Chemother.">
        <title>Whole-genome pyrosequencing of an epidemic multidrug-resistant Acinetobacter baumannii strain belonging to the European clone II group.</title>
        <authorList>
            <person name="Iacono M."/>
            <person name="Villa L."/>
            <person name="Fortini D."/>
            <person name="Bordoni R."/>
            <person name="Imperi F."/>
            <person name="Bonnal R.J."/>
            <person name="Sicheritz-Ponten T."/>
            <person name="De Bellis G."/>
            <person name="Visca P."/>
            <person name="Cassone A."/>
            <person name="Carattoli A."/>
        </authorList>
    </citation>
    <scope>NUCLEOTIDE SEQUENCE [LARGE SCALE GENOMIC DNA]</scope>
    <source>
        <strain>ACICU</strain>
    </source>
</reference>
<sequence>MTERSPLRVGIGGPVGSGKTALTLNLCRALRDKYNMAVVTNDIYTKEDSNFLTRNEAMSPDRIVGVETGGCPHTAIREDASINLAAIDDLCEKFDGLELIIIESGGDNLAATFSPELSDLTLYVIDVAGGEKIPRKGGPGITKSDLLIINKTDLAPMVGANLDVMDQDAKRMRGEKPFLFSNMKTQDGLEEIIQFIEKQGLFKA</sequence>